<proteinExistence type="inferred from homology"/>
<comment type="function">
    <text evidence="1">Catalyzes the decarboxylation of four acetate groups of uroporphyrinogen-III to yield coproporphyrinogen-III.</text>
</comment>
<comment type="catalytic activity">
    <reaction evidence="1">
        <text>uroporphyrinogen III + 4 H(+) = coproporphyrinogen III + 4 CO2</text>
        <dbReference type="Rhea" id="RHEA:19865"/>
        <dbReference type="ChEBI" id="CHEBI:15378"/>
        <dbReference type="ChEBI" id="CHEBI:16526"/>
        <dbReference type="ChEBI" id="CHEBI:57308"/>
        <dbReference type="ChEBI" id="CHEBI:57309"/>
        <dbReference type="EC" id="4.1.1.37"/>
    </reaction>
</comment>
<comment type="pathway">
    <text evidence="1">Porphyrin-containing compound metabolism; protoporphyrin-IX biosynthesis; coproporphyrinogen-III from 5-aminolevulinate: step 4/4.</text>
</comment>
<comment type="subunit">
    <text evidence="1">Homodimer.</text>
</comment>
<comment type="subcellular location">
    <subcellularLocation>
        <location evidence="1">Cytoplasm</location>
    </subcellularLocation>
</comment>
<comment type="similarity">
    <text evidence="1">Belongs to the uroporphyrinogen decarboxylase family.</text>
</comment>
<organism>
    <name type="scientific">Roseiflexus sp. (strain RS-1)</name>
    <dbReference type="NCBI Taxonomy" id="357808"/>
    <lineage>
        <taxon>Bacteria</taxon>
        <taxon>Bacillati</taxon>
        <taxon>Chloroflexota</taxon>
        <taxon>Chloroflexia</taxon>
        <taxon>Chloroflexales</taxon>
        <taxon>Roseiflexineae</taxon>
        <taxon>Roseiflexaceae</taxon>
        <taxon>Roseiflexus</taxon>
    </lineage>
</organism>
<gene>
    <name evidence="1" type="primary">hemE</name>
    <name type="ordered locus">RoseRS_1748</name>
</gene>
<keyword id="KW-0963">Cytoplasm</keyword>
<keyword id="KW-0210">Decarboxylase</keyword>
<keyword id="KW-0456">Lyase</keyword>
<keyword id="KW-0627">Porphyrin biosynthesis</keyword>
<accession>A5UU35</accession>
<protein>
    <recommendedName>
        <fullName evidence="1">Uroporphyrinogen decarboxylase</fullName>
        <shortName evidence="1">UPD</shortName>
        <shortName evidence="1">URO-D</shortName>
        <ecNumber evidence="1">4.1.1.37</ecNumber>
    </recommendedName>
</protein>
<reference key="1">
    <citation type="submission" date="2007-04" db="EMBL/GenBank/DDBJ databases">
        <title>Complete sequence of Roseiflexus sp. RS-1.</title>
        <authorList>
            <consortium name="US DOE Joint Genome Institute"/>
            <person name="Copeland A."/>
            <person name="Lucas S."/>
            <person name="Lapidus A."/>
            <person name="Barry K."/>
            <person name="Detter J.C."/>
            <person name="Glavina del Rio T."/>
            <person name="Hammon N."/>
            <person name="Israni S."/>
            <person name="Dalin E."/>
            <person name="Tice H."/>
            <person name="Pitluck S."/>
            <person name="Chertkov O."/>
            <person name="Brettin T."/>
            <person name="Bruce D."/>
            <person name="Han C."/>
            <person name="Schmutz J."/>
            <person name="Larimer F."/>
            <person name="Land M."/>
            <person name="Hauser L."/>
            <person name="Kyrpides N."/>
            <person name="Mikhailova N."/>
            <person name="Bryant D.A."/>
            <person name="Richardson P."/>
        </authorList>
    </citation>
    <scope>NUCLEOTIDE SEQUENCE [LARGE SCALE GENOMIC DNA]</scope>
    <source>
        <strain>RS-1</strain>
    </source>
</reference>
<sequence>MTHSRFLAACRRQPVDATPVWFMRQAGRYMPEYRAIRERYGFLEMVKTPELAAEITMQPIRAFSVDAAIIFADILPLLEGMGLHLTYEQGEGPVIHNPVRSPADVAALRTPDPRETVAYTIQAIRLVKRDLEGRAPLIGFSGAPFTLAAYAIEGGSSRDHRLTKALMYAEPQAWRELMERLTAQVSAYLIAQIEAGADAVQIFDSWAGALAPGDYADYVLPFVQKCIIAVRAGCGIVPPPPIIYFGVGLSGMLGLLRQTDADVIGLDWRIHLDDGWAQVGPGVAVQGNLDPHTLLAPWTEVRRRTADILDRAAGRPGHIFNLGHGIVPETPVDTVRRLAEFVHEYSAE</sequence>
<name>DCUP_ROSS1</name>
<feature type="chain" id="PRO_0000325688" description="Uroporphyrinogen decarboxylase">
    <location>
        <begin position="1"/>
        <end position="348"/>
    </location>
</feature>
<feature type="binding site" evidence="1">
    <location>
        <begin position="24"/>
        <end position="28"/>
    </location>
    <ligand>
        <name>substrate</name>
    </ligand>
</feature>
<feature type="binding site" evidence="1">
    <location>
        <position position="73"/>
    </location>
    <ligand>
        <name>substrate</name>
    </ligand>
</feature>
<feature type="binding site" evidence="1">
    <location>
        <position position="150"/>
    </location>
    <ligand>
        <name>substrate</name>
    </ligand>
</feature>
<feature type="binding site" evidence="1">
    <location>
        <position position="205"/>
    </location>
    <ligand>
        <name>substrate</name>
    </ligand>
</feature>
<feature type="binding site" evidence="1">
    <location>
        <position position="324"/>
    </location>
    <ligand>
        <name>substrate</name>
    </ligand>
</feature>
<feature type="site" description="Transition state stabilizer" evidence="1">
    <location>
        <position position="73"/>
    </location>
</feature>
<dbReference type="EC" id="4.1.1.37" evidence="1"/>
<dbReference type="EMBL" id="CP000686">
    <property type="protein sequence ID" value="ABQ90138.1"/>
    <property type="molecule type" value="Genomic_DNA"/>
</dbReference>
<dbReference type="RefSeq" id="WP_011956485.1">
    <property type="nucleotide sequence ID" value="NC_009523.1"/>
</dbReference>
<dbReference type="SMR" id="A5UU35"/>
<dbReference type="STRING" id="357808.RoseRS_1748"/>
<dbReference type="KEGG" id="rrs:RoseRS_1748"/>
<dbReference type="eggNOG" id="COG0407">
    <property type="taxonomic scope" value="Bacteria"/>
</dbReference>
<dbReference type="HOGENOM" id="CLU_040933_0_0_0"/>
<dbReference type="OrthoDB" id="9780425at2"/>
<dbReference type="UniPathway" id="UPA00251">
    <property type="reaction ID" value="UER00321"/>
</dbReference>
<dbReference type="Proteomes" id="UP000006554">
    <property type="component" value="Chromosome"/>
</dbReference>
<dbReference type="GO" id="GO:0005829">
    <property type="term" value="C:cytosol"/>
    <property type="evidence" value="ECO:0007669"/>
    <property type="project" value="TreeGrafter"/>
</dbReference>
<dbReference type="GO" id="GO:0004853">
    <property type="term" value="F:uroporphyrinogen decarboxylase activity"/>
    <property type="evidence" value="ECO:0007669"/>
    <property type="project" value="UniProtKB-UniRule"/>
</dbReference>
<dbReference type="GO" id="GO:0006782">
    <property type="term" value="P:protoporphyrinogen IX biosynthetic process"/>
    <property type="evidence" value="ECO:0007669"/>
    <property type="project" value="UniProtKB-UniRule"/>
</dbReference>
<dbReference type="CDD" id="cd00717">
    <property type="entry name" value="URO-D"/>
    <property type="match status" value="1"/>
</dbReference>
<dbReference type="FunFam" id="3.20.20.210:FF:000008">
    <property type="entry name" value="Uroporphyrinogen decarboxylase"/>
    <property type="match status" value="1"/>
</dbReference>
<dbReference type="Gene3D" id="3.20.20.210">
    <property type="match status" value="1"/>
</dbReference>
<dbReference type="HAMAP" id="MF_00218">
    <property type="entry name" value="URO_D"/>
    <property type="match status" value="1"/>
</dbReference>
<dbReference type="InterPro" id="IPR038071">
    <property type="entry name" value="UROD/MetE-like_sf"/>
</dbReference>
<dbReference type="InterPro" id="IPR006361">
    <property type="entry name" value="Uroporphyrinogen_deCO2ase_HemE"/>
</dbReference>
<dbReference type="InterPro" id="IPR000257">
    <property type="entry name" value="Uroporphyrinogen_deCOase"/>
</dbReference>
<dbReference type="NCBIfam" id="TIGR01464">
    <property type="entry name" value="hemE"/>
    <property type="match status" value="1"/>
</dbReference>
<dbReference type="PANTHER" id="PTHR21091">
    <property type="entry name" value="METHYLTETRAHYDROFOLATE:HOMOCYSTEINE METHYLTRANSFERASE RELATED"/>
    <property type="match status" value="1"/>
</dbReference>
<dbReference type="PANTHER" id="PTHR21091:SF169">
    <property type="entry name" value="UROPORPHYRINOGEN DECARBOXYLASE"/>
    <property type="match status" value="1"/>
</dbReference>
<dbReference type="Pfam" id="PF01208">
    <property type="entry name" value="URO-D"/>
    <property type="match status" value="1"/>
</dbReference>
<dbReference type="SUPFAM" id="SSF51726">
    <property type="entry name" value="UROD/MetE-like"/>
    <property type="match status" value="1"/>
</dbReference>
<dbReference type="PROSITE" id="PS00906">
    <property type="entry name" value="UROD_1"/>
    <property type="match status" value="1"/>
</dbReference>
<dbReference type="PROSITE" id="PS00907">
    <property type="entry name" value="UROD_2"/>
    <property type="match status" value="1"/>
</dbReference>
<evidence type="ECO:0000255" key="1">
    <source>
        <dbReference type="HAMAP-Rule" id="MF_00218"/>
    </source>
</evidence>